<gene>
    <name evidence="1" type="primary">uppS</name>
    <name type="ordered locus">HH_1093</name>
</gene>
<reference key="1">
    <citation type="journal article" date="2003" name="Proc. Natl. Acad. Sci. U.S.A.">
        <title>The complete genome sequence of the carcinogenic bacterium Helicobacter hepaticus.</title>
        <authorList>
            <person name="Suerbaum S."/>
            <person name="Josenhans C."/>
            <person name="Sterzenbach T."/>
            <person name="Drescher B."/>
            <person name="Brandt P."/>
            <person name="Bell M."/>
            <person name="Droege M."/>
            <person name="Fartmann B."/>
            <person name="Fischer H.-P."/>
            <person name="Ge Z."/>
            <person name="Hoerster A."/>
            <person name="Holland R."/>
            <person name="Klein K."/>
            <person name="Koenig J."/>
            <person name="Macko L."/>
            <person name="Mendz G.L."/>
            <person name="Nyakatura G."/>
            <person name="Schauer D.B."/>
            <person name="Shen Z."/>
            <person name="Weber J."/>
            <person name="Frosch M."/>
            <person name="Fox J.G."/>
        </authorList>
    </citation>
    <scope>NUCLEOTIDE SEQUENCE [LARGE SCALE GENOMIC DNA]</scope>
    <source>
        <strain>ATCC 51449 / 3B1</strain>
    </source>
</reference>
<keyword id="KW-0460">Magnesium</keyword>
<keyword id="KW-0479">Metal-binding</keyword>
<keyword id="KW-1185">Reference proteome</keyword>
<keyword id="KW-0808">Transferase</keyword>
<evidence type="ECO:0000255" key="1">
    <source>
        <dbReference type="HAMAP-Rule" id="MF_01139"/>
    </source>
</evidence>
<protein>
    <recommendedName>
        <fullName evidence="1">Isoprenyl transferase</fullName>
        <ecNumber evidence="1">2.5.1.-</ecNumber>
    </recommendedName>
</protein>
<accession>Q7VH74</accession>
<proteinExistence type="inferred from homology"/>
<dbReference type="EC" id="2.5.1.-" evidence="1"/>
<dbReference type="EMBL" id="AE017125">
    <property type="protein sequence ID" value="AAP77690.1"/>
    <property type="molecule type" value="Genomic_DNA"/>
</dbReference>
<dbReference type="RefSeq" id="WP_011115933.1">
    <property type="nucleotide sequence ID" value="NC_004917.1"/>
</dbReference>
<dbReference type="SMR" id="Q7VH74"/>
<dbReference type="STRING" id="235279.HH_1093"/>
<dbReference type="KEGG" id="hhe:HH_1093"/>
<dbReference type="eggNOG" id="COG0020">
    <property type="taxonomic scope" value="Bacteria"/>
</dbReference>
<dbReference type="HOGENOM" id="CLU_038505_1_1_7"/>
<dbReference type="OrthoDB" id="4191603at2"/>
<dbReference type="Proteomes" id="UP000002495">
    <property type="component" value="Chromosome"/>
</dbReference>
<dbReference type="GO" id="GO:0005829">
    <property type="term" value="C:cytosol"/>
    <property type="evidence" value="ECO:0007669"/>
    <property type="project" value="TreeGrafter"/>
</dbReference>
<dbReference type="GO" id="GO:0008834">
    <property type="term" value="F:ditrans,polycis-undecaprenyl-diphosphate synthase [(2E,6E)-farnesyl-diphosphate specific] activity"/>
    <property type="evidence" value="ECO:0007669"/>
    <property type="project" value="TreeGrafter"/>
</dbReference>
<dbReference type="GO" id="GO:0000287">
    <property type="term" value="F:magnesium ion binding"/>
    <property type="evidence" value="ECO:0007669"/>
    <property type="project" value="UniProtKB-UniRule"/>
</dbReference>
<dbReference type="GO" id="GO:0016094">
    <property type="term" value="P:polyprenol biosynthetic process"/>
    <property type="evidence" value="ECO:0007669"/>
    <property type="project" value="TreeGrafter"/>
</dbReference>
<dbReference type="CDD" id="cd00475">
    <property type="entry name" value="Cis_IPPS"/>
    <property type="match status" value="1"/>
</dbReference>
<dbReference type="FunFam" id="3.40.1180.10:FF:000001">
    <property type="entry name" value="(2E,6E)-farnesyl-diphosphate-specific ditrans,polycis-undecaprenyl-diphosphate synthase"/>
    <property type="match status" value="1"/>
</dbReference>
<dbReference type="Gene3D" id="3.40.1180.10">
    <property type="entry name" value="Decaprenyl diphosphate synthase-like"/>
    <property type="match status" value="1"/>
</dbReference>
<dbReference type="HAMAP" id="MF_01139">
    <property type="entry name" value="ISPT"/>
    <property type="match status" value="1"/>
</dbReference>
<dbReference type="InterPro" id="IPR001441">
    <property type="entry name" value="UPP_synth-like"/>
</dbReference>
<dbReference type="InterPro" id="IPR018520">
    <property type="entry name" value="UPP_synth-like_CS"/>
</dbReference>
<dbReference type="InterPro" id="IPR036424">
    <property type="entry name" value="UPP_synth-like_sf"/>
</dbReference>
<dbReference type="NCBIfam" id="NF011407">
    <property type="entry name" value="PRK14833.1"/>
    <property type="match status" value="1"/>
</dbReference>
<dbReference type="NCBIfam" id="TIGR00055">
    <property type="entry name" value="uppS"/>
    <property type="match status" value="1"/>
</dbReference>
<dbReference type="PANTHER" id="PTHR10291:SF0">
    <property type="entry name" value="DEHYDRODOLICHYL DIPHOSPHATE SYNTHASE 2"/>
    <property type="match status" value="1"/>
</dbReference>
<dbReference type="PANTHER" id="PTHR10291">
    <property type="entry name" value="DEHYDRODOLICHYL DIPHOSPHATE SYNTHASE FAMILY MEMBER"/>
    <property type="match status" value="1"/>
</dbReference>
<dbReference type="Pfam" id="PF01255">
    <property type="entry name" value="Prenyltransf"/>
    <property type="match status" value="1"/>
</dbReference>
<dbReference type="SUPFAM" id="SSF64005">
    <property type="entry name" value="Undecaprenyl diphosphate synthase"/>
    <property type="match status" value="1"/>
</dbReference>
<dbReference type="PROSITE" id="PS01066">
    <property type="entry name" value="UPP_SYNTHASE"/>
    <property type="match status" value="1"/>
</dbReference>
<feature type="chain" id="PRO_0000123622" description="Isoprenyl transferase">
    <location>
        <begin position="1"/>
        <end position="237"/>
    </location>
</feature>
<feature type="active site" evidence="1">
    <location>
        <position position="14"/>
    </location>
</feature>
<feature type="active site" description="Proton acceptor" evidence="1">
    <location>
        <position position="62"/>
    </location>
</feature>
<feature type="binding site" evidence="1">
    <location>
        <position position="14"/>
    </location>
    <ligand>
        <name>Mg(2+)</name>
        <dbReference type="ChEBI" id="CHEBI:18420"/>
    </ligand>
</feature>
<feature type="binding site" evidence="1">
    <location>
        <begin position="15"/>
        <end position="18"/>
    </location>
    <ligand>
        <name>substrate</name>
    </ligand>
</feature>
<feature type="binding site" evidence="1">
    <location>
        <position position="19"/>
    </location>
    <ligand>
        <name>substrate</name>
    </ligand>
</feature>
<feature type="binding site" evidence="1">
    <location>
        <position position="27"/>
    </location>
    <ligand>
        <name>substrate</name>
    </ligand>
</feature>
<feature type="binding site" evidence="1">
    <location>
        <position position="31"/>
    </location>
    <ligand>
        <name>substrate</name>
    </ligand>
</feature>
<feature type="binding site" evidence="1">
    <location>
        <begin position="59"/>
        <end position="61"/>
    </location>
    <ligand>
        <name>substrate</name>
    </ligand>
</feature>
<feature type="binding site" evidence="1">
    <location>
        <position position="63"/>
    </location>
    <ligand>
        <name>substrate</name>
    </ligand>
</feature>
<feature type="binding site" evidence="1">
    <location>
        <position position="65"/>
    </location>
    <ligand>
        <name>substrate</name>
    </ligand>
</feature>
<feature type="binding site" evidence="1">
    <location>
        <position position="184"/>
    </location>
    <ligand>
        <name>substrate</name>
    </ligand>
</feature>
<feature type="binding site" evidence="1">
    <location>
        <begin position="190"/>
        <end position="192"/>
    </location>
    <ligand>
        <name>substrate</name>
    </ligand>
</feature>
<feature type="binding site" evidence="1">
    <location>
        <position position="203"/>
    </location>
    <ligand>
        <name>Mg(2+)</name>
        <dbReference type="ChEBI" id="CHEBI:18420"/>
    </ligand>
</feature>
<comment type="function">
    <text evidence="1">Catalyzes the condensation of isopentenyl diphosphate (IPP) with allylic pyrophosphates generating different type of terpenoids.</text>
</comment>
<comment type="cofactor">
    <cofactor evidence="1">
        <name>Mg(2+)</name>
        <dbReference type="ChEBI" id="CHEBI:18420"/>
    </cofactor>
    <text evidence="1">Binds 2 magnesium ions per subunit.</text>
</comment>
<comment type="subunit">
    <text evidence="1">Homodimer.</text>
</comment>
<comment type="similarity">
    <text evidence="1">Belongs to the UPP synthase family.</text>
</comment>
<sequence length="237" mass="27370">MKPSYPQHIAVIMDGNGRWAKKQGKKRTQGHKEGAKIVRDITQWCAEKGIPYLTLYAFSTENWKRPKIEVDFLMKLLEKYLHDEKPVYMKNHIRFRVIGDISVFNTRLKNAILELEHATQNHTKLTQILALNYGSRDEIARTFIKLAHTLTPHTLASLSSQDIISMINANLDTATLPDVDMLIRTGGEKRISNFMLWQASYAELFFTPTLFPSFGKNELNAMLEEFLQRQRRFGGVE</sequence>
<name>ISPT_HELHP</name>
<organism>
    <name type="scientific">Helicobacter hepaticus (strain ATCC 51449 / 3B1)</name>
    <dbReference type="NCBI Taxonomy" id="235279"/>
    <lineage>
        <taxon>Bacteria</taxon>
        <taxon>Pseudomonadati</taxon>
        <taxon>Campylobacterota</taxon>
        <taxon>Epsilonproteobacteria</taxon>
        <taxon>Campylobacterales</taxon>
        <taxon>Helicobacteraceae</taxon>
        <taxon>Helicobacter</taxon>
    </lineage>
</organism>